<gene>
    <name evidence="8" type="primary">Abhd15</name>
</gene>
<comment type="function">
    <text evidence="6">May regulate adipocyte lipolysis and liver lipid accumulation.</text>
</comment>
<comment type="subunit">
    <text evidence="5">Interacts with PDE3B; this interaction regulates PDE3B's stability and expression and, thereby, impacts the antilipolytic action of insulin.</text>
</comment>
<comment type="subcellular location">
    <subcellularLocation>
        <location evidence="7">Secreted</location>
    </subcellularLocation>
</comment>
<comment type="tissue specificity">
    <text evidence="5">Mainly expressed in adipocytes and adipose depots, followed by a weak expression in liver and pancreas (PubMed:29768196). In white adipose tissue (WAT), only expressed in mature adipocytes and primary adipocytes differentiated from stromal vascular cells (SVCs), but not in undifferentiated SVCs (PubMed:29768196).</text>
</comment>
<comment type="induction">
    <text evidence="4">Decreased by elevated free fatty acid levels and aging.</text>
</comment>
<comment type="disruption phenotype">
    <text evidence="5">Homozygous knockout mice lacking Abhd15 are fertile and newborn pups exhibit no obvious defects.</text>
</comment>
<comment type="similarity">
    <text evidence="7">Belongs to the AB hydrolase superfamily. AB hydrolase 4 family.</text>
</comment>
<comment type="sequence caution" evidence="7">
    <conflict type="frameshift">
        <sequence resource="EMBL-CDS" id="BAB31349"/>
    </conflict>
</comment>
<comment type="sequence caution" evidence="7">
    <conflict type="frameshift">
        <sequence resource="EMBL-CDS" id="BAC25102"/>
    </conflict>
</comment>
<organism>
    <name type="scientific">Mus musculus</name>
    <name type="common">Mouse</name>
    <dbReference type="NCBI Taxonomy" id="10090"/>
    <lineage>
        <taxon>Eukaryota</taxon>
        <taxon>Metazoa</taxon>
        <taxon>Chordata</taxon>
        <taxon>Craniata</taxon>
        <taxon>Vertebrata</taxon>
        <taxon>Euteleostomi</taxon>
        <taxon>Mammalia</taxon>
        <taxon>Eutheria</taxon>
        <taxon>Euarchontoglires</taxon>
        <taxon>Glires</taxon>
        <taxon>Rodentia</taxon>
        <taxon>Myomorpha</taxon>
        <taxon>Muroidea</taxon>
        <taxon>Muridae</taxon>
        <taxon>Murinae</taxon>
        <taxon>Mus</taxon>
        <taxon>Mus</taxon>
    </lineage>
</organism>
<dbReference type="EMBL" id="AK018696">
    <property type="protein sequence ID" value="BAB31349.1"/>
    <property type="status" value="ALT_FRAME"/>
    <property type="molecule type" value="mRNA"/>
</dbReference>
<dbReference type="EMBL" id="AK004929">
    <property type="protein sequence ID" value="BAC25102.1"/>
    <property type="status" value="ALT_FRAME"/>
    <property type="molecule type" value="mRNA"/>
</dbReference>
<dbReference type="EMBL" id="AK042032">
    <property type="protein sequence ID" value="BAC31138.1"/>
    <property type="molecule type" value="mRNA"/>
</dbReference>
<dbReference type="EMBL" id="AK046590">
    <property type="protein sequence ID" value="BAE20655.1"/>
    <property type="molecule type" value="mRNA"/>
</dbReference>
<dbReference type="EMBL" id="AL591136">
    <property type="status" value="NOT_ANNOTATED_CDS"/>
    <property type="molecule type" value="Genomic_DNA"/>
</dbReference>
<dbReference type="CCDS" id="CCDS36234.1"/>
<dbReference type="RefSeq" id="NP_080461.3">
    <property type="nucleotide sequence ID" value="NM_026185.4"/>
</dbReference>
<dbReference type="BioGRID" id="212218">
    <property type="interactions" value="1"/>
</dbReference>
<dbReference type="FunCoup" id="Q5F2F2">
    <property type="interactions" value="27"/>
</dbReference>
<dbReference type="STRING" id="10090.ENSMUSP00000091541"/>
<dbReference type="ESTHER" id="mouse-ABH15">
    <property type="family name" value="abh_upf0017"/>
</dbReference>
<dbReference type="iPTMnet" id="Q5F2F2"/>
<dbReference type="PhosphoSitePlus" id="Q5F2F2"/>
<dbReference type="SwissPalm" id="Q5F2F2"/>
<dbReference type="jPOST" id="Q5F2F2"/>
<dbReference type="PaxDb" id="10090-ENSMUSP00000091541"/>
<dbReference type="ProteomicsDB" id="296434"/>
<dbReference type="Antibodypedia" id="2595">
    <property type="antibodies" value="50 antibodies from 20 providers"/>
</dbReference>
<dbReference type="DNASU" id="67477"/>
<dbReference type="Ensembl" id="ENSMUST00000094004.5">
    <property type="protein sequence ID" value="ENSMUSP00000091541.5"/>
    <property type="gene ID" value="ENSMUSG00000000686.12"/>
</dbReference>
<dbReference type="GeneID" id="67477"/>
<dbReference type="KEGG" id="mmu:67477"/>
<dbReference type="UCSC" id="uc007kha.1">
    <property type="organism name" value="mouse"/>
</dbReference>
<dbReference type="AGR" id="MGI:1914727"/>
<dbReference type="CTD" id="116236"/>
<dbReference type="MGI" id="MGI:1914727">
    <property type="gene designation" value="Abhd15"/>
</dbReference>
<dbReference type="VEuPathDB" id="HostDB:ENSMUSG00000000686"/>
<dbReference type="eggNOG" id="KOG1838">
    <property type="taxonomic scope" value="Eukaryota"/>
</dbReference>
<dbReference type="GeneTree" id="ENSGT00950000182902"/>
<dbReference type="HOGENOM" id="CLU_032487_3_0_1"/>
<dbReference type="InParanoid" id="Q5F2F2"/>
<dbReference type="OMA" id="AWSHEAT"/>
<dbReference type="OrthoDB" id="247542at2759"/>
<dbReference type="PhylomeDB" id="Q5F2F2"/>
<dbReference type="TreeFam" id="TF332985"/>
<dbReference type="BioGRID-ORCS" id="67477">
    <property type="hits" value="2 hits in 76 CRISPR screens"/>
</dbReference>
<dbReference type="ChiTaRS" id="Abhd15">
    <property type="organism name" value="mouse"/>
</dbReference>
<dbReference type="PRO" id="PR:Q5F2F2"/>
<dbReference type="Proteomes" id="UP000000589">
    <property type="component" value="Chromosome 11"/>
</dbReference>
<dbReference type="RNAct" id="Q5F2F2">
    <property type="molecule type" value="protein"/>
</dbReference>
<dbReference type="Bgee" id="ENSMUSG00000000686">
    <property type="expression patterns" value="Expressed in brown adipose tissue and 106 other cell types or tissues"/>
</dbReference>
<dbReference type="ExpressionAtlas" id="Q5F2F2">
    <property type="expression patterns" value="baseline and differential"/>
</dbReference>
<dbReference type="GO" id="GO:0005576">
    <property type="term" value="C:extracellular region"/>
    <property type="evidence" value="ECO:0007669"/>
    <property type="project" value="UniProtKB-SubCell"/>
</dbReference>
<dbReference type="GO" id="GO:0060612">
    <property type="term" value="P:adipose tissue development"/>
    <property type="evidence" value="ECO:0000314"/>
    <property type="project" value="UniProtKB"/>
</dbReference>
<dbReference type="GO" id="GO:0016042">
    <property type="term" value="P:lipid catabolic process"/>
    <property type="evidence" value="ECO:0000315"/>
    <property type="project" value="UniProtKB"/>
</dbReference>
<dbReference type="FunFam" id="3.40.50.1820:FF:000103">
    <property type="entry name" value="Abhydrolase domain-containing 15"/>
    <property type="match status" value="1"/>
</dbReference>
<dbReference type="Gene3D" id="3.40.50.1820">
    <property type="entry name" value="alpha/beta hydrolase"/>
    <property type="match status" value="1"/>
</dbReference>
<dbReference type="InterPro" id="IPR050960">
    <property type="entry name" value="AB_hydrolase_4_sf"/>
</dbReference>
<dbReference type="InterPro" id="IPR029058">
    <property type="entry name" value="AB_hydrolase_fold"/>
</dbReference>
<dbReference type="InterPro" id="IPR012020">
    <property type="entry name" value="ABHD4"/>
</dbReference>
<dbReference type="PANTHER" id="PTHR10794">
    <property type="entry name" value="ABHYDROLASE DOMAIN-CONTAINING PROTEIN"/>
    <property type="match status" value="1"/>
</dbReference>
<dbReference type="PANTHER" id="PTHR10794:SF39">
    <property type="entry name" value="PROTEIN ABHD15"/>
    <property type="match status" value="1"/>
</dbReference>
<dbReference type="PIRSF" id="PIRSF005211">
    <property type="entry name" value="Ab_hydro_YheT"/>
    <property type="match status" value="1"/>
</dbReference>
<dbReference type="SUPFAM" id="SSF53474">
    <property type="entry name" value="alpha/beta-Hydrolases"/>
    <property type="match status" value="1"/>
</dbReference>
<sequence>MPPWAAALALLLAALALLLLRPWKRAVGARTSVRDHEEQEVASGGPADQFSDRREALPGGCSLICKPSALAQCLLRALRRSAALEPSPRSWLSGPHLQTFCHFILPVGPGPELAREYLQLADDGLVALDWVIGPCARGRRVTNPGSLPPVLLVIPNAWGRLTRNVLGLCLLALERGYYPVIFHRRGHHGCPLVSPRLQPFGDPSDLKEAVTYIRFRHPAAPLFAVSEGSGSALLLSYLGECGSSSYVTGAACISPVLRCREWFEAGLPWPYERGFLLHQKISLSRYASALEDTVDTGKLFRSGSLREFEETLFCHTKSCPISWDTYWDLNDPLRDVDEAAVPVLCICSADDPVCGPPEHTLPAELFHSNPYFFLLLSHHGGHCGFLRPEPLPAWSHEVILESFRALTEFFRMEERMKGLSRRRTSFLGGRRRWGGLQKREVSPSSNLEEIFNWKRSYTR</sequence>
<feature type="signal peptide" evidence="3">
    <location>
        <begin position="1"/>
        <end position="28"/>
    </location>
</feature>
<feature type="chain" id="PRO_0000345396" description="Protein ABHD15">
    <location>
        <begin position="29"/>
        <end position="459"/>
    </location>
</feature>
<feature type="active site" description="Charge relay system" evidence="1">
    <location>
        <position position="351"/>
    </location>
</feature>
<feature type="active site" description="Charge relay system" evidence="1">
    <location>
        <position position="382"/>
    </location>
</feature>
<feature type="modified residue" description="Phosphoserine" evidence="2">
    <location>
        <position position="425"/>
    </location>
</feature>
<feature type="sequence conflict" description="In Ref. 1; BAB31349." evidence="7" ref="1">
    <original>P</original>
    <variation>L</variation>
    <location>
        <position position="106"/>
    </location>
</feature>
<feature type="sequence conflict" description="In Ref. 1; BAE20655." evidence="7" ref="1">
    <original>L</original>
    <variation>H</variation>
    <location>
        <position position="147"/>
    </location>
</feature>
<feature type="sequence conflict" description="In Ref. 1; BAB31349." evidence="7" ref="1">
    <original>L</original>
    <variation>V</variation>
    <location>
        <position position="305"/>
    </location>
</feature>
<feature type="sequence conflict" description="In Ref. 1; BAB31349." evidence="7" ref="1">
    <original>F</original>
    <variation>C</variation>
    <location>
        <position position="308"/>
    </location>
</feature>
<proteinExistence type="evidence at protein level"/>
<accession>Q5F2F2</accession>
<accession>Q3V371</accession>
<accession>Q8C9I5</accession>
<accession>Q8CF57</accession>
<accession>Q9CU23</accession>
<protein>
    <recommendedName>
        <fullName evidence="7">Protein ABHD15</fullName>
    </recommendedName>
    <alternativeName>
        <fullName evidence="7">Alpha/beta hydrolase domain-containing protein 15</fullName>
        <shortName evidence="8">Abhydrolase domain-containing protein 15</shortName>
    </alternativeName>
</protein>
<keyword id="KW-0597">Phosphoprotein</keyword>
<keyword id="KW-1185">Reference proteome</keyword>
<keyword id="KW-0964">Secreted</keyword>
<keyword id="KW-0732">Signal</keyword>
<evidence type="ECO:0000250" key="1"/>
<evidence type="ECO:0000250" key="2">
    <source>
        <dbReference type="UniProtKB" id="Q6UXT9"/>
    </source>
</evidence>
<evidence type="ECO:0000255" key="3"/>
<evidence type="ECO:0000269" key="4">
    <source>
    </source>
</evidence>
<evidence type="ECO:0000269" key="5">
    <source>
    </source>
</evidence>
<evidence type="ECO:0000269" key="6">
    <source>
    </source>
</evidence>
<evidence type="ECO:0000305" key="7"/>
<evidence type="ECO:0000312" key="8">
    <source>
        <dbReference type="MGI" id="MGI:1914727"/>
    </source>
</evidence>
<name>ABH15_MOUSE</name>
<reference key="1">
    <citation type="journal article" date="2005" name="Science">
        <title>The transcriptional landscape of the mammalian genome.</title>
        <authorList>
            <person name="Carninci P."/>
            <person name="Kasukawa T."/>
            <person name="Katayama S."/>
            <person name="Gough J."/>
            <person name="Frith M.C."/>
            <person name="Maeda N."/>
            <person name="Oyama R."/>
            <person name="Ravasi T."/>
            <person name="Lenhard B."/>
            <person name="Wells C."/>
            <person name="Kodzius R."/>
            <person name="Shimokawa K."/>
            <person name="Bajic V.B."/>
            <person name="Brenner S.E."/>
            <person name="Batalov S."/>
            <person name="Forrest A.R."/>
            <person name="Zavolan M."/>
            <person name="Davis M.J."/>
            <person name="Wilming L.G."/>
            <person name="Aidinis V."/>
            <person name="Allen J.E."/>
            <person name="Ambesi-Impiombato A."/>
            <person name="Apweiler R."/>
            <person name="Aturaliya R.N."/>
            <person name="Bailey T.L."/>
            <person name="Bansal M."/>
            <person name="Baxter L."/>
            <person name="Beisel K.W."/>
            <person name="Bersano T."/>
            <person name="Bono H."/>
            <person name="Chalk A.M."/>
            <person name="Chiu K.P."/>
            <person name="Choudhary V."/>
            <person name="Christoffels A."/>
            <person name="Clutterbuck D.R."/>
            <person name="Crowe M.L."/>
            <person name="Dalla E."/>
            <person name="Dalrymple B.P."/>
            <person name="de Bono B."/>
            <person name="Della Gatta G."/>
            <person name="di Bernardo D."/>
            <person name="Down T."/>
            <person name="Engstrom P."/>
            <person name="Fagiolini M."/>
            <person name="Faulkner G."/>
            <person name="Fletcher C.F."/>
            <person name="Fukushima T."/>
            <person name="Furuno M."/>
            <person name="Futaki S."/>
            <person name="Gariboldi M."/>
            <person name="Georgii-Hemming P."/>
            <person name="Gingeras T.R."/>
            <person name="Gojobori T."/>
            <person name="Green R.E."/>
            <person name="Gustincich S."/>
            <person name="Harbers M."/>
            <person name="Hayashi Y."/>
            <person name="Hensch T.K."/>
            <person name="Hirokawa N."/>
            <person name="Hill D."/>
            <person name="Huminiecki L."/>
            <person name="Iacono M."/>
            <person name="Ikeo K."/>
            <person name="Iwama A."/>
            <person name="Ishikawa T."/>
            <person name="Jakt M."/>
            <person name="Kanapin A."/>
            <person name="Katoh M."/>
            <person name="Kawasawa Y."/>
            <person name="Kelso J."/>
            <person name="Kitamura H."/>
            <person name="Kitano H."/>
            <person name="Kollias G."/>
            <person name="Krishnan S.P."/>
            <person name="Kruger A."/>
            <person name="Kummerfeld S.K."/>
            <person name="Kurochkin I.V."/>
            <person name="Lareau L.F."/>
            <person name="Lazarevic D."/>
            <person name="Lipovich L."/>
            <person name="Liu J."/>
            <person name="Liuni S."/>
            <person name="McWilliam S."/>
            <person name="Madan Babu M."/>
            <person name="Madera M."/>
            <person name="Marchionni L."/>
            <person name="Matsuda H."/>
            <person name="Matsuzawa S."/>
            <person name="Miki H."/>
            <person name="Mignone F."/>
            <person name="Miyake S."/>
            <person name="Morris K."/>
            <person name="Mottagui-Tabar S."/>
            <person name="Mulder N."/>
            <person name="Nakano N."/>
            <person name="Nakauchi H."/>
            <person name="Ng P."/>
            <person name="Nilsson R."/>
            <person name="Nishiguchi S."/>
            <person name="Nishikawa S."/>
            <person name="Nori F."/>
            <person name="Ohara O."/>
            <person name="Okazaki Y."/>
            <person name="Orlando V."/>
            <person name="Pang K.C."/>
            <person name="Pavan W.J."/>
            <person name="Pavesi G."/>
            <person name="Pesole G."/>
            <person name="Petrovsky N."/>
            <person name="Piazza S."/>
            <person name="Reed J."/>
            <person name="Reid J.F."/>
            <person name="Ring B.Z."/>
            <person name="Ringwald M."/>
            <person name="Rost B."/>
            <person name="Ruan Y."/>
            <person name="Salzberg S.L."/>
            <person name="Sandelin A."/>
            <person name="Schneider C."/>
            <person name="Schoenbach C."/>
            <person name="Sekiguchi K."/>
            <person name="Semple C.A."/>
            <person name="Seno S."/>
            <person name="Sessa L."/>
            <person name="Sheng Y."/>
            <person name="Shibata Y."/>
            <person name="Shimada H."/>
            <person name="Shimada K."/>
            <person name="Silva D."/>
            <person name="Sinclair B."/>
            <person name="Sperling S."/>
            <person name="Stupka E."/>
            <person name="Sugiura K."/>
            <person name="Sultana R."/>
            <person name="Takenaka Y."/>
            <person name="Taki K."/>
            <person name="Tammoja K."/>
            <person name="Tan S.L."/>
            <person name="Tang S."/>
            <person name="Taylor M.S."/>
            <person name="Tegner J."/>
            <person name="Teichmann S.A."/>
            <person name="Ueda H.R."/>
            <person name="van Nimwegen E."/>
            <person name="Verardo R."/>
            <person name="Wei C.L."/>
            <person name="Yagi K."/>
            <person name="Yamanishi H."/>
            <person name="Zabarovsky E."/>
            <person name="Zhu S."/>
            <person name="Zimmer A."/>
            <person name="Hide W."/>
            <person name="Bult C."/>
            <person name="Grimmond S.M."/>
            <person name="Teasdale R.D."/>
            <person name="Liu E.T."/>
            <person name="Brusic V."/>
            <person name="Quackenbush J."/>
            <person name="Wahlestedt C."/>
            <person name="Mattick J.S."/>
            <person name="Hume D.A."/>
            <person name="Kai C."/>
            <person name="Sasaki D."/>
            <person name="Tomaru Y."/>
            <person name="Fukuda S."/>
            <person name="Kanamori-Katayama M."/>
            <person name="Suzuki M."/>
            <person name="Aoki J."/>
            <person name="Arakawa T."/>
            <person name="Iida J."/>
            <person name="Imamura K."/>
            <person name="Itoh M."/>
            <person name="Kato T."/>
            <person name="Kawaji H."/>
            <person name="Kawagashira N."/>
            <person name="Kawashima T."/>
            <person name="Kojima M."/>
            <person name="Kondo S."/>
            <person name="Konno H."/>
            <person name="Nakano K."/>
            <person name="Ninomiya N."/>
            <person name="Nishio T."/>
            <person name="Okada M."/>
            <person name="Plessy C."/>
            <person name="Shibata K."/>
            <person name="Shiraki T."/>
            <person name="Suzuki S."/>
            <person name="Tagami M."/>
            <person name="Waki K."/>
            <person name="Watahiki A."/>
            <person name="Okamura-Oho Y."/>
            <person name="Suzuki H."/>
            <person name="Kawai J."/>
            <person name="Hayashizaki Y."/>
        </authorList>
    </citation>
    <scope>NUCLEOTIDE SEQUENCE [LARGE SCALE MRNA]</scope>
    <source>
        <strain>C57BL/6J</strain>
        <tissue>Adipose tissue</tissue>
        <tissue>Liver</tissue>
        <tissue>Thymus</tissue>
    </source>
</reference>
<reference key="2">
    <citation type="journal article" date="2009" name="PLoS Biol.">
        <title>Lineage-specific biology revealed by a finished genome assembly of the mouse.</title>
        <authorList>
            <person name="Church D.M."/>
            <person name="Goodstadt L."/>
            <person name="Hillier L.W."/>
            <person name="Zody M.C."/>
            <person name="Goldstein S."/>
            <person name="She X."/>
            <person name="Bult C.J."/>
            <person name="Agarwala R."/>
            <person name="Cherry J.L."/>
            <person name="DiCuccio M."/>
            <person name="Hlavina W."/>
            <person name="Kapustin Y."/>
            <person name="Meric P."/>
            <person name="Maglott D."/>
            <person name="Birtle Z."/>
            <person name="Marques A.C."/>
            <person name="Graves T."/>
            <person name="Zhou S."/>
            <person name="Teague B."/>
            <person name="Potamousis K."/>
            <person name="Churas C."/>
            <person name="Place M."/>
            <person name="Herschleb J."/>
            <person name="Runnheim R."/>
            <person name="Forrest D."/>
            <person name="Amos-Landgraf J."/>
            <person name="Schwartz D.C."/>
            <person name="Cheng Z."/>
            <person name="Lindblad-Toh K."/>
            <person name="Eichler E.E."/>
            <person name="Ponting C.P."/>
        </authorList>
    </citation>
    <scope>NUCLEOTIDE SEQUENCE [LARGE SCALE GENOMIC DNA]</scope>
    <source>
        <strain>C57BL/6J</strain>
    </source>
</reference>
<reference key="3">
    <citation type="journal article" date="2010" name="Cell">
        <title>A tissue-specific atlas of mouse protein phosphorylation and expression.</title>
        <authorList>
            <person name="Huttlin E.L."/>
            <person name="Jedrychowski M.P."/>
            <person name="Elias J.E."/>
            <person name="Goswami T."/>
            <person name="Rad R."/>
            <person name="Beausoleil S.A."/>
            <person name="Villen J."/>
            <person name="Haas W."/>
            <person name="Sowa M.E."/>
            <person name="Gygi S.P."/>
        </authorList>
    </citation>
    <scope>IDENTIFICATION BY MASS SPECTROMETRY [LARGE SCALE ANALYSIS]</scope>
    <source>
        <tissue>Brown adipose tissue</tissue>
        <tissue>Liver</tissue>
    </source>
</reference>
<reference key="4">
    <citation type="journal article" date="2013" name="PLoS ONE">
        <title>alpha/beta-hydrolase domain containing protein 15 (ABHD15)--an adipogenic protein protecting from apoptosis.</title>
        <authorList>
            <person name="Walenta E."/>
            <person name="Pessentheiner A.R."/>
            <person name="Pelzmann H.J."/>
            <person name="Deutsch A."/>
            <person name="Goeritzer M."/>
            <person name="Kratky D."/>
            <person name="Hackl H."/>
            <person name="Oh D.Y."/>
            <person name="Prokesch A."/>
            <person name="Bogner-Strauss J.G."/>
        </authorList>
    </citation>
    <scope>INDUCTION</scope>
</reference>
<reference key="5">
    <citation type="journal article" date="2018" name="Cell Rep.">
        <title>Loss of ABHD15 Impairs the Anti-lipolytic Action of Insulin by Altering PDE3B Stability and Contributes to Insulin Resistance.</title>
        <authorList>
            <person name="Xia W."/>
            <person name="Pessentheiner A.R."/>
            <person name="Hofer D.C."/>
            <person name="Amor M."/>
            <person name="Schreiber R."/>
            <person name="Schoiswohl G."/>
            <person name="Eichmann T.O."/>
            <person name="Walenta E."/>
            <person name="Itariu B."/>
            <person name="Prager G."/>
            <person name="Hackl H."/>
            <person name="Stulnig T."/>
            <person name="Kratky D."/>
            <person name="Ruelicke T."/>
            <person name="Bogner-Strauss J.G."/>
        </authorList>
    </citation>
    <scope>INTERACTION WITH PDE3B</scope>
    <scope>TISSUE SPECIFICITY</scope>
    <scope>DISRUPTION PHENOTYPE</scope>
</reference>
<reference key="6">
    <citation type="journal article" date="2019" name="Mol. Metab.">
        <title>ABHD15 regulates adipose tissue lipolysis and hepatic lipid accumulation.</title>
        <authorList>
            <person name="Stoeckli J."/>
            <person name="Zadoorian A."/>
            <person name="Cooke K.C."/>
            <person name="Deshpande V."/>
            <person name="Yau B."/>
            <person name="Herrmann G."/>
            <person name="Kebede M.A."/>
            <person name="Humphrey S.J."/>
            <person name="James D.E."/>
        </authorList>
    </citation>
    <scope>FUNCTION</scope>
</reference>
<reference key="7">
    <citation type="journal article" date="2021" name="Mol. Metab.">
        <title>Corrigendum to 'ABHD15 regulates adipose tissue lipolysis and hepatic lipid accumulation' [Molecular Metabolism 25 (2019) p.83-94].</title>
        <authorList>
            <person name="Stoeckli J."/>
            <person name="Zadoorian A."/>
            <person name="Cooke K.C."/>
            <person name="Deshpande V."/>
            <person name="Yau B."/>
            <person name="Herrmann G."/>
            <person name="Kebede M.A."/>
            <person name="Humphrey S.J."/>
            <person name="James D.E."/>
        </authorList>
    </citation>
    <scope>ERRATUM OF PUBMED:31105056</scope>
</reference>